<comment type="function">
    <text evidence="1">Cleaves both 3' and 5' ssDNA extremities of branched DNA structures.</text>
</comment>
<comment type="subcellular location">
    <subcellularLocation>
        <location evidence="1">Cytoplasm</location>
    </subcellularLocation>
</comment>
<comment type="similarity">
    <text evidence="1">Belongs to the NucS endonuclease family.</text>
</comment>
<feature type="chain" id="PRO_0000155700" description="Endonuclease NucS">
    <location>
        <begin position="1"/>
        <end position="236"/>
    </location>
</feature>
<evidence type="ECO:0000255" key="1">
    <source>
        <dbReference type="HAMAP-Rule" id="MF_00722"/>
    </source>
</evidence>
<reference key="1">
    <citation type="journal article" date="2001" name="Proc. Natl. Acad. Sci. U.S.A.">
        <title>The complete genome of the crenarchaeon Sulfolobus solfataricus P2.</title>
        <authorList>
            <person name="She Q."/>
            <person name="Singh R.K."/>
            <person name="Confalonieri F."/>
            <person name="Zivanovic Y."/>
            <person name="Allard G."/>
            <person name="Awayez M.J."/>
            <person name="Chan-Weiher C.C.-Y."/>
            <person name="Clausen I.G."/>
            <person name="Curtis B.A."/>
            <person name="De Moors A."/>
            <person name="Erauso G."/>
            <person name="Fletcher C."/>
            <person name="Gordon P.M.K."/>
            <person name="Heikamp-de Jong I."/>
            <person name="Jeffries A.C."/>
            <person name="Kozera C.J."/>
            <person name="Medina N."/>
            <person name="Peng X."/>
            <person name="Thi-Ngoc H.P."/>
            <person name="Redder P."/>
            <person name="Schenk M.E."/>
            <person name="Theriault C."/>
            <person name="Tolstrup N."/>
            <person name="Charlebois R.L."/>
            <person name="Doolittle W.F."/>
            <person name="Duguet M."/>
            <person name="Gaasterland T."/>
            <person name="Garrett R.A."/>
            <person name="Ragan M.A."/>
            <person name="Sensen C.W."/>
            <person name="Van der Oost J."/>
        </authorList>
    </citation>
    <scope>NUCLEOTIDE SEQUENCE [LARGE SCALE GENOMIC DNA]</scope>
    <source>
        <strain>ATCC 35092 / DSM 1617 / JCM 11322 / P2</strain>
    </source>
</reference>
<accession>Q97WK8</accession>
<keyword id="KW-0963">Cytoplasm</keyword>
<keyword id="KW-0238">DNA-binding</keyword>
<keyword id="KW-0255">Endonuclease</keyword>
<keyword id="KW-0378">Hydrolase</keyword>
<keyword id="KW-0540">Nuclease</keyword>
<keyword id="KW-1185">Reference proteome</keyword>
<dbReference type="EC" id="3.1.-.-" evidence="1"/>
<dbReference type="EMBL" id="AE006641">
    <property type="protein sequence ID" value="AAK42378.1"/>
    <property type="molecule type" value="Genomic_DNA"/>
</dbReference>
<dbReference type="PIR" id="C90390">
    <property type="entry name" value="C90390"/>
</dbReference>
<dbReference type="RefSeq" id="WP_009992078.1">
    <property type="nucleotide sequence ID" value="NC_002754.1"/>
</dbReference>
<dbReference type="SMR" id="Q97WK8"/>
<dbReference type="STRING" id="273057.SSO2208"/>
<dbReference type="PaxDb" id="273057-SSO2208"/>
<dbReference type="EnsemblBacteria" id="AAK42378">
    <property type="protein sequence ID" value="AAK42378"/>
    <property type="gene ID" value="SSO2208"/>
</dbReference>
<dbReference type="GeneID" id="44127943"/>
<dbReference type="KEGG" id="sso:SSO2208"/>
<dbReference type="PATRIC" id="fig|273057.12.peg.2304"/>
<dbReference type="eggNOG" id="arCOG01304">
    <property type="taxonomic scope" value="Archaea"/>
</dbReference>
<dbReference type="HOGENOM" id="CLU_069350_1_0_2"/>
<dbReference type="InParanoid" id="Q97WK8"/>
<dbReference type="PhylomeDB" id="Q97WK8"/>
<dbReference type="Proteomes" id="UP000001974">
    <property type="component" value="Chromosome"/>
</dbReference>
<dbReference type="GO" id="GO:0005737">
    <property type="term" value="C:cytoplasm"/>
    <property type="evidence" value="ECO:0007669"/>
    <property type="project" value="UniProtKB-SubCell"/>
</dbReference>
<dbReference type="GO" id="GO:0003677">
    <property type="term" value="F:DNA binding"/>
    <property type="evidence" value="ECO:0007669"/>
    <property type="project" value="UniProtKB-KW"/>
</dbReference>
<dbReference type="GO" id="GO:0000014">
    <property type="term" value="F:single-stranded DNA endodeoxyribonuclease activity"/>
    <property type="evidence" value="ECO:0007669"/>
    <property type="project" value="UniProtKB-UniRule"/>
</dbReference>
<dbReference type="CDD" id="cd22341">
    <property type="entry name" value="NucS-like"/>
    <property type="match status" value="1"/>
</dbReference>
<dbReference type="Gene3D" id="2.70.180.20">
    <property type="match status" value="1"/>
</dbReference>
<dbReference type="Gene3D" id="3.40.1350.10">
    <property type="match status" value="1"/>
</dbReference>
<dbReference type="HAMAP" id="MF_00722">
    <property type="entry name" value="NucS"/>
    <property type="match status" value="1"/>
</dbReference>
<dbReference type="InterPro" id="IPR002793">
    <property type="entry name" value="Endonuclease_NucS"/>
</dbReference>
<dbReference type="InterPro" id="IPR048301">
    <property type="entry name" value="NucS_C"/>
</dbReference>
<dbReference type="InterPro" id="IPR048302">
    <property type="entry name" value="NucS_N"/>
</dbReference>
<dbReference type="InterPro" id="IPR049173">
    <property type="entry name" value="NucS_N_sf"/>
</dbReference>
<dbReference type="InterPro" id="IPR011856">
    <property type="entry name" value="tRNA_endonuc-like_dom_sf"/>
</dbReference>
<dbReference type="NCBIfam" id="NF003270">
    <property type="entry name" value="PRK04247.1"/>
    <property type="match status" value="1"/>
</dbReference>
<dbReference type="PANTHER" id="PTHR38814">
    <property type="entry name" value="ENDONUCLEASE NUCS"/>
    <property type="match status" value="1"/>
</dbReference>
<dbReference type="PANTHER" id="PTHR38814:SF1">
    <property type="entry name" value="ENDONUCLEASE NUCS"/>
    <property type="match status" value="1"/>
</dbReference>
<dbReference type="Pfam" id="PF01939">
    <property type="entry name" value="NucS_C"/>
    <property type="match status" value="1"/>
</dbReference>
<dbReference type="Pfam" id="PF21003">
    <property type="entry name" value="NucS_N"/>
    <property type="match status" value="1"/>
</dbReference>
<name>NUCS_SACS2</name>
<proteinExistence type="inferred from homology"/>
<gene>
    <name evidence="1" type="primary">nucS</name>
    <name type="ordered locus">SSO2208</name>
</gene>
<organism>
    <name type="scientific">Saccharolobus solfataricus (strain ATCC 35092 / DSM 1617 / JCM 11322 / P2)</name>
    <name type="common">Sulfolobus solfataricus</name>
    <dbReference type="NCBI Taxonomy" id="273057"/>
    <lineage>
        <taxon>Archaea</taxon>
        <taxon>Thermoproteota</taxon>
        <taxon>Thermoprotei</taxon>
        <taxon>Sulfolobales</taxon>
        <taxon>Sulfolobaceae</taxon>
        <taxon>Saccharolobus</taxon>
    </lineage>
</organism>
<protein>
    <recommendedName>
        <fullName evidence="1">Endonuclease NucS</fullName>
        <ecNumber evidence="1">3.1.-.-</ecNumber>
    </recommendedName>
</protein>
<sequence>MYSVLLNPSNTEIYSFLTDRIYRELIVIFATCKVNYKGRAESVASESPRLIILKPDGTVIIHESVKREPLNWQPPGTKIEIMNDYPLKIVAQRNRPKEVIEIDLKEVFYITSAEVKEGDFTIKGREIDIVNTIIQNPSMIEEGFVPLTREYNTPYGKIDLIGLDKKGNFVIIEVKRSKAQLNAISQLYRYYLHMREIKGDKIRGILVAPDLTIHARELLQKLGLEFIRYDIKNYSS</sequence>